<evidence type="ECO:0000250" key="1"/>
<evidence type="ECO:0000255" key="2"/>
<evidence type="ECO:0000255" key="3">
    <source>
        <dbReference type="HAMAP-Rule" id="MF_01389"/>
    </source>
</evidence>
<evidence type="ECO:0000256" key="4">
    <source>
        <dbReference type="SAM" id="MobiDB-lite"/>
    </source>
</evidence>
<evidence type="ECO:0000305" key="5"/>
<sequence length="224" mass="23348">MATHSHPHSHTVPARPRRVRKPGEPLRIGVGGPVGSGKTALVAALCRQLRGELSLAVLTNDIYTTEDADFLRTHAVLPDDRIAAVQTGGCPHTAIRDDITANLDAIDELMAAHDALDLILVESGGDNLTATFSSGLVDAQIFVIDVAGGDKVPRKGGPGVTYSDLLVVNKTDLAALVGADLAVMARDADAVRDGRPTVLQSLTEDPAASDVVAWVRSQLAADGV</sequence>
<gene>
    <name evidence="3" type="primary">ureG</name>
    <name type="ordered locus">MT1900</name>
</gene>
<comment type="function">
    <text evidence="3">Facilitates the functional incorporation of the urease nickel metallocenter. This process requires GTP hydrolysis, probably effectuated by UreG.</text>
</comment>
<comment type="subunit">
    <text evidence="1 5">Homodimer; disulfide-linked (Probable). The physiological role of the disulfide bond has not been proven in vivo. UreD, UreF and UreG form a complex that acts as a GTP-hydrolysis-dependent molecular chaperone, activating the urease apoprotein by helping to assemble the nickel containing metallocenter of UreC. The UreE protein probably delivers the nickel (By similarity).</text>
</comment>
<comment type="subcellular location">
    <subcellularLocation>
        <location evidence="3">Cytoplasm</location>
    </subcellularLocation>
</comment>
<comment type="similarity">
    <text evidence="3">Belongs to the SIMIBI class G3E GTPase family. UreG subfamily.</text>
</comment>
<feature type="chain" id="PRO_0000428554" description="Urease accessory protein UreG">
    <location>
        <begin position="1"/>
        <end position="224"/>
    </location>
</feature>
<feature type="region of interest" description="Disordered" evidence="4">
    <location>
        <begin position="1"/>
        <end position="25"/>
    </location>
</feature>
<feature type="compositionally biased region" description="Basic residues" evidence="4">
    <location>
        <begin position="1"/>
        <end position="20"/>
    </location>
</feature>
<feature type="binding site" evidence="3">
    <location>
        <begin position="32"/>
        <end position="39"/>
    </location>
    <ligand>
        <name>GTP</name>
        <dbReference type="ChEBI" id="CHEBI:37565"/>
    </ligand>
</feature>
<feature type="disulfide bond" description="Interchain" evidence="2">
    <location>
        <position position="90"/>
    </location>
</feature>
<keyword id="KW-0143">Chaperone</keyword>
<keyword id="KW-0963">Cytoplasm</keyword>
<keyword id="KW-1015">Disulfide bond</keyword>
<keyword id="KW-0342">GTP-binding</keyword>
<keyword id="KW-0996">Nickel insertion</keyword>
<keyword id="KW-0547">Nucleotide-binding</keyword>
<keyword id="KW-1185">Reference proteome</keyword>
<protein>
    <recommendedName>
        <fullName evidence="3">Urease accessory protein UreG</fullName>
    </recommendedName>
</protein>
<reference key="1">
    <citation type="journal article" date="2002" name="J. Bacteriol.">
        <title>Whole-genome comparison of Mycobacterium tuberculosis clinical and laboratory strains.</title>
        <authorList>
            <person name="Fleischmann R.D."/>
            <person name="Alland D."/>
            <person name="Eisen J.A."/>
            <person name="Carpenter L."/>
            <person name="White O."/>
            <person name="Peterson J.D."/>
            <person name="DeBoy R.T."/>
            <person name="Dodson R.J."/>
            <person name="Gwinn M.L."/>
            <person name="Haft D.H."/>
            <person name="Hickey E.K."/>
            <person name="Kolonay J.F."/>
            <person name="Nelson W.C."/>
            <person name="Umayam L.A."/>
            <person name="Ermolaeva M.D."/>
            <person name="Salzberg S.L."/>
            <person name="Delcher A."/>
            <person name="Utterback T.R."/>
            <person name="Weidman J.F."/>
            <person name="Khouri H.M."/>
            <person name="Gill J."/>
            <person name="Mikula A."/>
            <person name="Bishai W."/>
            <person name="Jacobs W.R. Jr."/>
            <person name="Venter J.C."/>
            <person name="Fraser C.M."/>
        </authorList>
    </citation>
    <scope>NUCLEOTIDE SEQUENCE [LARGE SCALE GENOMIC DNA]</scope>
    <source>
        <strain>CDC 1551 / Oshkosh</strain>
    </source>
</reference>
<organism>
    <name type="scientific">Mycobacterium tuberculosis (strain CDC 1551 / Oshkosh)</name>
    <dbReference type="NCBI Taxonomy" id="83331"/>
    <lineage>
        <taxon>Bacteria</taxon>
        <taxon>Bacillati</taxon>
        <taxon>Actinomycetota</taxon>
        <taxon>Actinomycetes</taxon>
        <taxon>Mycobacteriales</taxon>
        <taxon>Mycobacteriaceae</taxon>
        <taxon>Mycobacterium</taxon>
        <taxon>Mycobacterium tuberculosis complex</taxon>
    </lineage>
</organism>
<name>UREG_MYCTO</name>
<dbReference type="EMBL" id="AE000516">
    <property type="protein sequence ID" value="AAK46171.1"/>
    <property type="molecule type" value="Genomic_DNA"/>
</dbReference>
<dbReference type="PIR" id="D70665">
    <property type="entry name" value="D70665"/>
</dbReference>
<dbReference type="RefSeq" id="WP_003409313.1">
    <property type="nucleotide sequence ID" value="NZ_KK341227.1"/>
</dbReference>
<dbReference type="SMR" id="P9WFE2"/>
<dbReference type="KEGG" id="mtc:MT1900"/>
<dbReference type="PATRIC" id="fig|83331.31.peg.2044"/>
<dbReference type="HOGENOM" id="CLU_072144_1_0_11"/>
<dbReference type="Proteomes" id="UP000001020">
    <property type="component" value="Chromosome"/>
</dbReference>
<dbReference type="GO" id="GO:0005737">
    <property type="term" value="C:cytoplasm"/>
    <property type="evidence" value="ECO:0007669"/>
    <property type="project" value="UniProtKB-SubCell"/>
</dbReference>
<dbReference type="GO" id="GO:0005525">
    <property type="term" value="F:GTP binding"/>
    <property type="evidence" value="ECO:0007669"/>
    <property type="project" value="UniProtKB-KW"/>
</dbReference>
<dbReference type="GO" id="GO:0003924">
    <property type="term" value="F:GTPase activity"/>
    <property type="evidence" value="ECO:0007669"/>
    <property type="project" value="InterPro"/>
</dbReference>
<dbReference type="GO" id="GO:0016151">
    <property type="term" value="F:nickel cation binding"/>
    <property type="evidence" value="ECO:0007669"/>
    <property type="project" value="UniProtKB-UniRule"/>
</dbReference>
<dbReference type="GO" id="GO:0043419">
    <property type="term" value="P:urea catabolic process"/>
    <property type="evidence" value="ECO:0007669"/>
    <property type="project" value="InterPro"/>
</dbReference>
<dbReference type="CDD" id="cd05540">
    <property type="entry name" value="UreG"/>
    <property type="match status" value="1"/>
</dbReference>
<dbReference type="FunFam" id="3.40.50.300:FF:000208">
    <property type="entry name" value="Urease accessory protein UreG"/>
    <property type="match status" value="1"/>
</dbReference>
<dbReference type="Gene3D" id="3.40.50.300">
    <property type="entry name" value="P-loop containing nucleotide triphosphate hydrolases"/>
    <property type="match status" value="1"/>
</dbReference>
<dbReference type="HAMAP" id="MF_01389">
    <property type="entry name" value="UreG"/>
    <property type="match status" value="1"/>
</dbReference>
<dbReference type="InterPro" id="IPR003495">
    <property type="entry name" value="CobW/HypB/UreG_nucleotide-bd"/>
</dbReference>
<dbReference type="InterPro" id="IPR027417">
    <property type="entry name" value="P-loop_NTPase"/>
</dbReference>
<dbReference type="InterPro" id="IPR004400">
    <property type="entry name" value="UreG"/>
</dbReference>
<dbReference type="NCBIfam" id="TIGR00101">
    <property type="entry name" value="ureG"/>
    <property type="match status" value="1"/>
</dbReference>
<dbReference type="PANTHER" id="PTHR31715">
    <property type="entry name" value="UREASE ACCESSORY PROTEIN G"/>
    <property type="match status" value="1"/>
</dbReference>
<dbReference type="PANTHER" id="PTHR31715:SF0">
    <property type="entry name" value="UREASE ACCESSORY PROTEIN G"/>
    <property type="match status" value="1"/>
</dbReference>
<dbReference type="Pfam" id="PF02492">
    <property type="entry name" value="cobW"/>
    <property type="match status" value="1"/>
</dbReference>
<dbReference type="PIRSF" id="PIRSF005624">
    <property type="entry name" value="Ni-bind_GTPase"/>
    <property type="match status" value="1"/>
</dbReference>
<dbReference type="SUPFAM" id="SSF52540">
    <property type="entry name" value="P-loop containing nucleoside triphosphate hydrolases"/>
    <property type="match status" value="1"/>
</dbReference>
<proteinExistence type="inferred from homology"/>
<accession>P9WFE2</accession>
<accession>L0T828</accession>
<accession>P0A664</accession>
<accession>P50051</accession>